<dbReference type="EC" id="3.4.24.-"/>
<dbReference type="EMBL" id="AJ537452">
    <property type="protein sequence ID" value="CAD60967.1"/>
    <property type="molecule type" value="mRNA"/>
</dbReference>
<dbReference type="EMBL" id="AK048612">
    <property type="protein sequence ID" value="BAC33391.1"/>
    <property type="molecule type" value="mRNA"/>
</dbReference>
<dbReference type="EMBL" id="AK054015">
    <property type="protein sequence ID" value="BAC35621.1"/>
    <property type="molecule type" value="mRNA"/>
</dbReference>
<dbReference type="EMBL" id="AC102219">
    <property type="status" value="NOT_ANNOTATED_CDS"/>
    <property type="molecule type" value="Genomic_DNA"/>
</dbReference>
<dbReference type="EMBL" id="AC156609">
    <property type="status" value="NOT_ANNOTATED_CDS"/>
    <property type="molecule type" value="Genomic_DNA"/>
</dbReference>
<dbReference type="EMBL" id="AC159963">
    <property type="status" value="NOT_ANNOTATED_CDS"/>
    <property type="molecule type" value="Genomic_DNA"/>
</dbReference>
<dbReference type="CCDS" id="CCDS27384.1">
    <molecule id="Q811B3-1"/>
</dbReference>
<dbReference type="RefSeq" id="NP_780710.2">
    <molecule id="Q811B3-1"/>
    <property type="nucleotide sequence ID" value="NM_175501.3"/>
</dbReference>
<dbReference type="SMR" id="Q811B3"/>
<dbReference type="BioGRID" id="232071">
    <property type="interactions" value="3"/>
</dbReference>
<dbReference type="FunCoup" id="Q811B3">
    <property type="interactions" value="69"/>
</dbReference>
<dbReference type="STRING" id="10090.ENSMUSP00000057796"/>
<dbReference type="MEROPS" id="M12.237"/>
<dbReference type="GlyCosmos" id="Q811B3">
    <property type="glycosylation" value="1 site, No reported glycans"/>
</dbReference>
<dbReference type="GlyGen" id="Q811B3">
    <property type="glycosylation" value="2 sites"/>
</dbReference>
<dbReference type="iPTMnet" id="Q811B3"/>
<dbReference type="PhosphoSitePlus" id="Q811B3"/>
<dbReference type="PaxDb" id="10090-ENSMUSP00000057796"/>
<dbReference type="ProteomicsDB" id="277220">
    <molecule id="Q811B3-1"/>
</dbReference>
<dbReference type="ProteomicsDB" id="277221">
    <molecule id="Q811B3-2"/>
</dbReference>
<dbReference type="Pumba" id="Q811B3"/>
<dbReference type="Antibodypedia" id="22743">
    <property type="antibodies" value="135 antibodies from 22 providers"/>
</dbReference>
<dbReference type="DNASU" id="239337"/>
<dbReference type="Ensembl" id="ENSMUST00000061318.9">
    <molecule id="Q811B3-1"/>
    <property type="protein sequence ID" value="ENSMUSP00000057796.8"/>
    <property type="gene ID" value="ENSMUSG00000047497.11"/>
</dbReference>
<dbReference type="GeneID" id="239337"/>
<dbReference type="KEGG" id="mmu:239337"/>
<dbReference type="UCSC" id="uc007vha.1">
    <molecule id="Q811B3-2"/>
    <property type="organism name" value="mouse"/>
</dbReference>
<dbReference type="UCSC" id="uc007vhb.1">
    <molecule id="Q811B3-1"/>
    <property type="organism name" value="mouse"/>
</dbReference>
<dbReference type="AGR" id="MGI:2146046"/>
<dbReference type="CTD" id="81792"/>
<dbReference type="MGI" id="MGI:2146046">
    <property type="gene designation" value="Adamts12"/>
</dbReference>
<dbReference type="VEuPathDB" id="HostDB:ENSMUSG00000047497"/>
<dbReference type="eggNOG" id="KOG3538">
    <property type="taxonomic scope" value="Eukaryota"/>
</dbReference>
<dbReference type="GeneTree" id="ENSGT00940000155855"/>
<dbReference type="HOGENOM" id="CLU_000660_2_1_1"/>
<dbReference type="InParanoid" id="Q811B3"/>
<dbReference type="OMA" id="YGLHHPV"/>
<dbReference type="OrthoDB" id="12832at9989"/>
<dbReference type="PhylomeDB" id="Q811B3"/>
<dbReference type="TreeFam" id="TF313537"/>
<dbReference type="Reactome" id="R-MMU-5173214">
    <property type="pathway name" value="O-glycosylation of TSR domain-containing proteins"/>
</dbReference>
<dbReference type="BioGRID-ORCS" id="239337">
    <property type="hits" value="0 hits in 79 CRISPR screens"/>
</dbReference>
<dbReference type="ChiTaRS" id="Adamts12">
    <property type="organism name" value="mouse"/>
</dbReference>
<dbReference type="PRO" id="PR:Q811B3"/>
<dbReference type="Proteomes" id="UP000000589">
    <property type="component" value="Chromosome 15"/>
</dbReference>
<dbReference type="RNAct" id="Q811B3">
    <property type="molecule type" value="protein"/>
</dbReference>
<dbReference type="Bgee" id="ENSMUSG00000047497">
    <property type="expression patterns" value="Expressed in dermis and 145 other cell types or tissues"/>
</dbReference>
<dbReference type="GO" id="GO:0005576">
    <property type="term" value="C:extracellular region"/>
    <property type="evidence" value="ECO:0007669"/>
    <property type="project" value="UniProtKB-KW"/>
</dbReference>
<dbReference type="GO" id="GO:0046872">
    <property type="term" value="F:metal ion binding"/>
    <property type="evidence" value="ECO:0007669"/>
    <property type="project" value="UniProtKB-KW"/>
</dbReference>
<dbReference type="GO" id="GO:0004222">
    <property type="term" value="F:metalloendopeptidase activity"/>
    <property type="evidence" value="ECO:0007669"/>
    <property type="project" value="Ensembl"/>
</dbReference>
<dbReference type="GO" id="GO:0016477">
    <property type="term" value="P:cell migration"/>
    <property type="evidence" value="ECO:0007669"/>
    <property type="project" value="Ensembl"/>
</dbReference>
<dbReference type="GO" id="GO:0007160">
    <property type="term" value="P:cell-matrix adhesion"/>
    <property type="evidence" value="ECO:0007669"/>
    <property type="project" value="Ensembl"/>
</dbReference>
<dbReference type="GO" id="GO:0071773">
    <property type="term" value="P:cellular response to BMP stimulus"/>
    <property type="evidence" value="ECO:0007669"/>
    <property type="project" value="Ensembl"/>
</dbReference>
<dbReference type="GO" id="GO:0071347">
    <property type="term" value="P:cellular response to interleukin-1"/>
    <property type="evidence" value="ECO:0007669"/>
    <property type="project" value="Ensembl"/>
</dbReference>
<dbReference type="GO" id="GO:0071356">
    <property type="term" value="P:cellular response to tumor necrosis factor"/>
    <property type="evidence" value="ECO:0007669"/>
    <property type="project" value="Ensembl"/>
</dbReference>
<dbReference type="GO" id="GO:0002062">
    <property type="term" value="P:chondrocyte differentiation"/>
    <property type="evidence" value="ECO:0000316"/>
    <property type="project" value="MGI"/>
</dbReference>
<dbReference type="GO" id="GO:0030199">
    <property type="term" value="P:collagen fibril organization"/>
    <property type="evidence" value="ECO:0000316"/>
    <property type="project" value="MGI"/>
</dbReference>
<dbReference type="GO" id="GO:2001113">
    <property type="term" value="P:negative regulation of cellular response to hepatocyte growth factor stimulus"/>
    <property type="evidence" value="ECO:0007669"/>
    <property type="project" value="Ensembl"/>
</dbReference>
<dbReference type="GO" id="GO:1902548">
    <property type="term" value="P:negative regulation of cellular response to vascular endothelial growth factor stimulus"/>
    <property type="evidence" value="ECO:0007669"/>
    <property type="project" value="Ensembl"/>
</dbReference>
<dbReference type="GO" id="GO:0032331">
    <property type="term" value="P:negative regulation of chondrocyte differentiation"/>
    <property type="evidence" value="ECO:0007669"/>
    <property type="project" value="Ensembl"/>
</dbReference>
<dbReference type="GO" id="GO:1902203">
    <property type="term" value="P:negative regulation of hepatocyte growth factor receptor signaling pathway"/>
    <property type="evidence" value="ECO:0007669"/>
    <property type="project" value="Ensembl"/>
</dbReference>
<dbReference type="GO" id="GO:0001503">
    <property type="term" value="P:ossification"/>
    <property type="evidence" value="ECO:0000316"/>
    <property type="project" value="MGI"/>
</dbReference>
<dbReference type="GO" id="GO:0043931">
    <property type="term" value="P:ossification involved in bone maturation"/>
    <property type="evidence" value="ECO:0000316"/>
    <property type="project" value="MGI"/>
</dbReference>
<dbReference type="GO" id="GO:0030167">
    <property type="term" value="P:proteoglycan catabolic process"/>
    <property type="evidence" value="ECO:0007669"/>
    <property type="project" value="Ensembl"/>
</dbReference>
<dbReference type="GO" id="GO:0006029">
    <property type="term" value="P:proteoglycan metabolic process"/>
    <property type="evidence" value="ECO:0000316"/>
    <property type="project" value="MGI"/>
</dbReference>
<dbReference type="GO" id="GO:0051603">
    <property type="term" value="P:proteolysis involved in protein catabolic process"/>
    <property type="evidence" value="ECO:0007669"/>
    <property type="project" value="Ensembl"/>
</dbReference>
<dbReference type="GO" id="GO:1901509">
    <property type="term" value="P:regulation of endothelial tube morphogenesis"/>
    <property type="evidence" value="ECO:0007669"/>
    <property type="project" value="Ensembl"/>
</dbReference>
<dbReference type="GO" id="GO:0050727">
    <property type="term" value="P:regulation of inflammatory response"/>
    <property type="evidence" value="ECO:0007669"/>
    <property type="project" value="Ensembl"/>
</dbReference>
<dbReference type="CDD" id="cd04273">
    <property type="entry name" value="ZnMc_ADAMTS_like"/>
    <property type="match status" value="1"/>
</dbReference>
<dbReference type="FunFam" id="2.60.120.830:FF:000001">
    <property type="entry name" value="A disintegrin and metalloproteinase with thrombospondin motifs 1"/>
    <property type="match status" value="1"/>
</dbReference>
<dbReference type="FunFam" id="3.40.390.10:FF:000001">
    <property type="entry name" value="A disintegrin and metalloproteinase with thrombospondin motifs 1"/>
    <property type="match status" value="1"/>
</dbReference>
<dbReference type="FunFam" id="2.20.100.10:FF:000035">
    <property type="entry name" value="A disintegrin and metalloproteinase with thrombospondin motifs 12"/>
    <property type="match status" value="1"/>
</dbReference>
<dbReference type="FunFam" id="3.40.1620.60:FF:000004">
    <property type="entry name" value="A disintegrin and metalloproteinase with thrombospondin motifs 12"/>
    <property type="match status" value="1"/>
</dbReference>
<dbReference type="FunFam" id="2.20.100.10:FF:000005">
    <property type="entry name" value="ADAM metallopeptidase with thrombospondin type 1 motif 9"/>
    <property type="match status" value="2"/>
</dbReference>
<dbReference type="Gene3D" id="2.60.120.830">
    <property type="match status" value="1"/>
</dbReference>
<dbReference type="Gene3D" id="3.40.1620.60">
    <property type="match status" value="1"/>
</dbReference>
<dbReference type="Gene3D" id="3.40.390.10">
    <property type="entry name" value="Collagenase (Catalytic Domain)"/>
    <property type="match status" value="1"/>
</dbReference>
<dbReference type="Gene3D" id="2.20.100.10">
    <property type="entry name" value="Thrombospondin type-1 (TSP1) repeat"/>
    <property type="match status" value="8"/>
</dbReference>
<dbReference type="InterPro" id="IPR013273">
    <property type="entry name" value="ADAMTS/ADAMTS-like"/>
</dbReference>
<dbReference type="InterPro" id="IPR050439">
    <property type="entry name" value="ADAMTS_ADAMTS-like"/>
</dbReference>
<dbReference type="InterPro" id="IPR041645">
    <property type="entry name" value="ADAMTS_CR_2"/>
</dbReference>
<dbReference type="InterPro" id="IPR045371">
    <property type="entry name" value="ADAMTS_CR_3"/>
</dbReference>
<dbReference type="InterPro" id="IPR010294">
    <property type="entry name" value="ADAMTS_spacer1"/>
</dbReference>
<dbReference type="InterPro" id="IPR024079">
    <property type="entry name" value="MetalloPept_cat_dom_sf"/>
</dbReference>
<dbReference type="InterPro" id="IPR001590">
    <property type="entry name" value="Peptidase_M12B"/>
</dbReference>
<dbReference type="InterPro" id="IPR002870">
    <property type="entry name" value="Peptidase_M12B_N"/>
</dbReference>
<dbReference type="InterPro" id="IPR010909">
    <property type="entry name" value="PLAC"/>
</dbReference>
<dbReference type="InterPro" id="IPR000884">
    <property type="entry name" value="TSP1_rpt"/>
</dbReference>
<dbReference type="InterPro" id="IPR036383">
    <property type="entry name" value="TSP1_rpt_sf"/>
</dbReference>
<dbReference type="PANTHER" id="PTHR13723:SF189">
    <property type="entry name" value="A DISINTEGRIN AND METALLOPROTEINASE WITH THROMBOSPONDIN MOTIFS 12"/>
    <property type="match status" value="1"/>
</dbReference>
<dbReference type="PANTHER" id="PTHR13723">
    <property type="entry name" value="ADAMTS A DISINTEGRIN AND METALLOPROTEASE WITH THROMBOSPONDIN MOTIFS PROTEASE"/>
    <property type="match status" value="1"/>
</dbReference>
<dbReference type="Pfam" id="PF17771">
    <property type="entry name" value="ADAMTS_CR_2"/>
    <property type="match status" value="1"/>
</dbReference>
<dbReference type="Pfam" id="PF19236">
    <property type="entry name" value="ADAMTS_CR_3"/>
    <property type="match status" value="1"/>
</dbReference>
<dbReference type="Pfam" id="PF05986">
    <property type="entry name" value="ADAMTS_spacer1"/>
    <property type="match status" value="1"/>
</dbReference>
<dbReference type="Pfam" id="PF01562">
    <property type="entry name" value="Pep_M12B_propep"/>
    <property type="match status" value="1"/>
</dbReference>
<dbReference type="Pfam" id="PF01421">
    <property type="entry name" value="Reprolysin"/>
    <property type="match status" value="1"/>
</dbReference>
<dbReference type="Pfam" id="PF19030">
    <property type="entry name" value="TSP1_ADAMTS"/>
    <property type="match status" value="7"/>
</dbReference>
<dbReference type="Pfam" id="PF00090">
    <property type="entry name" value="TSP_1"/>
    <property type="match status" value="1"/>
</dbReference>
<dbReference type="PRINTS" id="PR01857">
    <property type="entry name" value="ADAMTSFAMILY"/>
</dbReference>
<dbReference type="SMART" id="SM00209">
    <property type="entry name" value="TSP1"/>
    <property type="match status" value="8"/>
</dbReference>
<dbReference type="SUPFAM" id="SSF55486">
    <property type="entry name" value="Metalloproteases ('zincins'), catalytic domain"/>
    <property type="match status" value="1"/>
</dbReference>
<dbReference type="SUPFAM" id="SSF82895">
    <property type="entry name" value="TSP-1 type 1 repeat"/>
    <property type="match status" value="8"/>
</dbReference>
<dbReference type="PROSITE" id="PS50215">
    <property type="entry name" value="ADAM_MEPRO"/>
    <property type="match status" value="1"/>
</dbReference>
<dbReference type="PROSITE" id="PS50900">
    <property type="entry name" value="PLAC"/>
    <property type="match status" value="1"/>
</dbReference>
<dbReference type="PROSITE" id="PS50092">
    <property type="entry name" value="TSP1"/>
    <property type="match status" value="6"/>
</dbReference>
<dbReference type="PROSITE" id="PS00142">
    <property type="entry name" value="ZINC_PROTEASE"/>
    <property type="match status" value="1"/>
</dbReference>
<feature type="signal peptide" evidence="2">
    <location>
        <begin position="1"/>
        <end position="25"/>
    </location>
</feature>
<feature type="propeptide" id="PRO_0000029188" evidence="1">
    <location>
        <begin position="26"/>
        <end position="244"/>
    </location>
</feature>
<feature type="chain" id="PRO_0000029189" description="A disintegrin and metalloproteinase with thrombospondin motifs 12">
    <location>
        <begin position="245"/>
        <end position="1600"/>
    </location>
</feature>
<feature type="domain" description="Peptidase M12B" evidence="5">
    <location>
        <begin position="250"/>
        <end position="460"/>
    </location>
</feature>
<feature type="domain" description="Disintegrin">
    <location>
        <begin position="469"/>
        <end position="548"/>
    </location>
</feature>
<feature type="domain" description="TSP type-1 1" evidence="3">
    <location>
        <begin position="546"/>
        <end position="601"/>
    </location>
</feature>
<feature type="domain" description="TSP type-1 2" evidence="3">
    <location>
        <begin position="827"/>
        <end position="887"/>
    </location>
</feature>
<feature type="domain" description="TSP type-1 3" evidence="3">
    <location>
        <begin position="891"/>
        <end position="947"/>
    </location>
</feature>
<feature type="domain" description="TSP type-1 4" evidence="3">
    <location>
        <begin position="948"/>
        <end position="1001"/>
    </location>
</feature>
<feature type="domain" description="TSP type-1 5" evidence="3">
    <location>
        <begin position="1318"/>
        <end position="1371"/>
    </location>
</feature>
<feature type="domain" description="TSP type-1 6" evidence="3">
    <location>
        <begin position="1373"/>
        <end position="1428"/>
    </location>
</feature>
<feature type="domain" description="TSP type-1 7" evidence="3">
    <location>
        <begin position="1429"/>
        <end position="1477"/>
    </location>
</feature>
<feature type="domain" description="TSP type-1 8" evidence="3">
    <location>
        <begin position="1478"/>
        <end position="1538"/>
    </location>
</feature>
<feature type="domain" description="PLAC" evidence="4">
    <location>
        <begin position="1541"/>
        <end position="1581"/>
    </location>
</feature>
<feature type="region of interest" description="Spacer 1">
    <location>
        <begin position="705"/>
        <end position="831"/>
    </location>
</feature>
<feature type="region of interest" description="Spacer 2">
    <location>
        <begin position="1001"/>
        <end position="1321"/>
    </location>
</feature>
<feature type="region of interest" description="Disordered" evidence="7">
    <location>
        <begin position="1006"/>
        <end position="1140"/>
    </location>
</feature>
<feature type="region of interest" description="Disordered" evidence="7">
    <location>
        <begin position="1158"/>
        <end position="1179"/>
    </location>
</feature>
<feature type="short sequence motif" description="Cysteine switch" evidence="1">
    <location>
        <begin position="210"/>
        <end position="217"/>
    </location>
</feature>
<feature type="compositionally biased region" description="Low complexity" evidence="7">
    <location>
        <begin position="1038"/>
        <end position="1047"/>
    </location>
</feature>
<feature type="compositionally biased region" description="Polar residues" evidence="7">
    <location>
        <begin position="1048"/>
        <end position="1107"/>
    </location>
</feature>
<feature type="compositionally biased region" description="Low complexity" evidence="7">
    <location>
        <begin position="1130"/>
        <end position="1140"/>
    </location>
</feature>
<feature type="active site" evidence="5 6">
    <location>
        <position position="397"/>
    </location>
</feature>
<feature type="binding site" description="in inhibited form" evidence="1">
    <location>
        <position position="212"/>
    </location>
    <ligand>
        <name>Zn(2+)</name>
        <dbReference type="ChEBI" id="CHEBI:29105"/>
        <note>catalytic</note>
    </ligand>
</feature>
<feature type="binding site" evidence="1">
    <location>
        <position position="396"/>
    </location>
    <ligand>
        <name>Zn(2+)</name>
        <dbReference type="ChEBI" id="CHEBI:29105"/>
        <note>catalytic</note>
    </ligand>
</feature>
<feature type="binding site" evidence="1">
    <location>
        <position position="400"/>
    </location>
    <ligand>
        <name>Zn(2+)</name>
        <dbReference type="ChEBI" id="CHEBI:29105"/>
        <note>catalytic</note>
    </ligand>
</feature>
<feature type="binding site" evidence="1">
    <location>
        <position position="406"/>
    </location>
    <ligand>
        <name>Zn(2+)</name>
        <dbReference type="ChEBI" id="CHEBI:29105"/>
        <note>catalytic</note>
    </ligand>
</feature>
<feature type="glycosylation site" description="N-linked (GlcNAc...) asparagine" evidence="2">
    <location>
        <position position="105"/>
    </location>
</feature>
<feature type="disulfide bond" evidence="1">
    <location>
        <begin position="326"/>
        <end position="380"/>
    </location>
</feature>
<feature type="disulfide bond" evidence="1">
    <location>
        <begin position="355"/>
        <end position="362"/>
    </location>
</feature>
<feature type="disulfide bond" evidence="1">
    <location>
        <begin position="374"/>
        <end position="455"/>
    </location>
</feature>
<feature type="disulfide bond" evidence="1">
    <location>
        <begin position="413"/>
        <end position="439"/>
    </location>
</feature>
<feature type="disulfide bond" evidence="1">
    <location>
        <begin position="482"/>
        <end position="505"/>
    </location>
</feature>
<feature type="disulfide bond" evidence="1">
    <location>
        <begin position="493"/>
        <end position="511"/>
    </location>
</feature>
<feature type="disulfide bond" evidence="1">
    <location>
        <begin position="500"/>
        <end position="530"/>
    </location>
</feature>
<feature type="disulfide bond" evidence="1">
    <location>
        <begin position="524"/>
        <end position="535"/>
    </location>
</feature>
<feature type="disulfide bond" evidence="1">
    <location>
        <begin position="558"/>
        <end position="595"/>
    </location>
</feature>
<feature type="disulfide bond" evidence="1">
    <location>
        <begin position="562"/>
        <end position="600"/>
    </location>
</feature>
<feature type="disulfide bond" evidence="1">
    <location>
        <begin position="573"/>
        <end position="585"/>
    </location>
</feature>
<feature type="splice variant" id="VSP_013149" description="In isoform 2." evidence="8">
    <original>GFFHL</original>
    <variation>VLITL</variation>
    <location>
        <begin position="167"/>
        <end position="171"/>
    </location>
</feature>
<feature type="splice variant" id="VSP_013150" description="In isoform 2." evidence="8">
    <location>
        <begin position="172"/>
        <end position="1600"/>
    </location>
</feature>
<feature type="sequence conflict" description="In Ref. 1; CAD60967." evidence="9" ref="1">
    <original>N</original>
    <variation>H</variation>
    <location>
        <position position="1010"/>
    </location>
</feature>
<gene>
    <name type="primary">Adamts12</name>
</gene>
<evidence type="ECO:0000250" key="1"/>
<evidence type="ECO:0000255" key="2"/>
<evidence type="ECO:0000255" key="3">
    <source>
        <dbReference type="PROSITE-ProRule" id="PRU00210"/>
    </source>
</evidence>
<evidence type="ECO:0000255" key="4">
    <source>
        <dbReference type="PROSITE-ProRule" id="PRU00233"/>
    </source>
</evidence>
<evidence type="ECO:0000255" key="5">
    <source>
        <dbReference type="PROSITE-ProRule" id="PRU00276"/>
    </source>
</evidence>
<evidence type="ECO:0000255" key="6">
    <source>
        <dbReference type="PROSITE-ProRule" id="PRU10095"/>
    </source>
</evidence>
<evidence type="ECO:0000256" key="7">
    <source>
        <dbReference type="SAM" id="MobiDB-lite"/>
    </source>
</evidence>
<evidence type="ECO:0000303" key="8">
    <source>
    </source>
</evidence>
<evidence type="ECO:0000305" key="9"/>
<sequence length="1600" mass="177769">MPCARGSWLAKLSIVAQLINFGAFCHGRQTQPWPVRFPDPRQEHFIKSLPEYHIVSPVQVDAGGHVLSYGLHHPVTSSRKKRAAGGSGDQLYYRISHEEKDLFFNLTVNWEFLSNGYVVEKRYGNLSHVKMVASSGQPCHLRGTVLQQGTTVGIGTAALSACQGLTGFFHLPHGDFFIEPVKKHPLTEEGSYPHVVYRRQSIRAPETKEPICGLKDSLDNSVKQELQREKWERKTLRSRSLSRRSISKERWVETLVVADTKTVEYHGSENVESYILTIMNMVTGLFHSPSIGNLVHIVVVRLILLEEEEQGLKIVHHAEKTLSSFCKWQKSINPKSDLNPVHHDVAVLITRKDICAGVNRPCETLGLSQLSGMCQPHRSCNINEDSGLPLAFTIAHELGHSFGIQHDGKENDCEPVGRHPYIMSQQIQYDPTPLTWSKCSKEYITRFLDRGRGFCLDDIPSKKGLKSNVIAPGVIYDVHHQCQLQYGPNATFCQEVENVCQTLWCSVKGFCRSKLDAAADGTRCGEKKWCMAGKCITVGKKPESIPGGWGRWSPWSHCSRTCGAGAQSAERLCNNPEPKFGGKYCTGERKRYRLCNVHPCRSDTPTFRQMQCSEFDTVPYKNQFYRWFPVFNAAHPCELYCRPIDEQFSERMLEAVIDGTPCFEGGNSRNVCINGICKRVGCDYEIDSNATEDRCGVCLGDGSACQTVKKLFRQKEGSGYVDIGLIPKGARDIRVMEIKAAGNFLAIRSEDPEKYYLNGGFIIQWNGNYKLAGTVFQYDRKGDLEKLIAPGPTNESVWLQLLFQVTNPGIKYEYTVRKDGLDNDVEKLLYFWQFGRWTECSVTCGTGIRRQAAHCVKKGHGIVKTTFCNPETQPSVRQKKCHEKDCPPRWWAGEWEACSTTCGPYGEKKRTVLCIQTMGSDEQALPATDCQHLLKPKALVSCNRDILCPSDWTVGNWSECSVSCGGGVRIRSVTCAKNLNEPCDKTRKPNSRALCGLQQCPFSRRVLKPNKDIAPSGKNQSTAEHDPFKPIPAPTSRPTPLSTPTVPESMSTSTPTINSLGSTIASQEDANGMGWQNNSTQAEEGSHFPTSSGSTSQVPVTSWSLSIQPDDENVSSSAIGPTSEGDFWATTTSDSGLSSSDAMTWQVTPFYSTMTTDPEVEIHSGSGEDSDQPLNKDKSNSVIWNKIGVPEHDAPMETDAELPLGPPPTSYMGEEPSWPPFSTKMEGSLPAWSFKNETPRDDGMIAEKSRKIPLPLAGDHHPATSEKLENHDKLALPNTTNPTQGFGPVLTEEDASNLIAEGFLLNASDYKHLMKDHSPAYWIVGNWSKCSTTCGLGAYWRSVECSSGVDADCTTIQRPDPAKKCHLRPCAGWRVGNWSKCSRNCSGGFKIREVQCMDSLDHHRSLRPFHCQFLAGAPPPLSMSCNLEPCGEWQVEPWSQCSRSCGGGVQERGVSCPGGLCDWTKRPATTVPCNRHLCCHWATGNWELCNTSCGGGSQKRTIHCIPSENSTTEDQDQCLCDHQVKPPEFQTCNQQACRKSADLTCLKDRLSISFCQTLKSMRKCSVPSVRAQCCLSCPQAPSIHTQRQRKQQLLQNHDML</sequence>
<keyword id="KW-0025">Alternative splicing</keyword>
<keyword id="KW-0165">Cleavage on pair of basic residues</keyword>
<keyword id="KW-1015">Disulfide bond</keyword>
<keyword id="KW-0272">Extracellular matrix</keyword>
<keyword id="KW-0325">Glycoprotein</keyword>
<keyword id="KW-0378">Hydrolase</keyword>
<keyword id="KW-0479">Metal-binding</keyword>
<keyword id="KW-0482">Metalloprotease</keyword>
<keyword id="KW-0645">Protease</keyword>
<keyword id="KW-1185">Reference proteome</keyword>
<keyword id="KW-0677">Repeat</keyword>
<keyword id="KW-0964">Secreted</keyword>
<keyword id="KW-0732">Signal</keyword>
<keyword id="KW-0862">Zinc</keyword>
<keyword id="KW-0865">Zymogen</keyword>
<comment type="function">
    <text evidence="1">Metalloprotease that plays a role in the degradation of COMP (By similarity). Also cleaves alpha-2 macroglobulin and aggregan. Has anti-tumorigenic properties (By similarity).</text>
</comment>
<comment type="cofactor">
    <cofactor evidence="1">
        <name>Zn(2+)</name>
        <dbReference type="ChEBI" id="CHEBI:29105"/>
    </cofactor>
    <text evidence="1">Binds 1 zinc ion per subunit.</text>
</comment>
<comment type="activity regulation">
    <text evidence="1">Inhibited by alpha-2 macroglobulin.</text>
</comment>
<comment type="subunit">
    <text evidence="1">Interacts with COMP.</text>
</comment>
<comment type="subcellular location">
    <subcellularLocation>
        <location evidence="1">Secreted</location>
        <location evidence="1">Extracellular space</location>
        <location evidence="1">Extracellular matrix</location>
    </subcellularLocation>
</comment>
<comment type="alternative products">
    <event type="alternative splicing"/>
    <isoform>
        <id>Q811B3-1</id>
        <name>1</name>
        <sequence type="displayed"/>
    </isoform>
    <isoform>
        <id>Q811B3-2</id>
        <name>2</name>
        <sequence type="described" ref="VSP_013149 VSP_013150"/>
    </isoform>
</comment>
<comment type="domain">
    <text evidence="1">The C-terminal four TSP1-like repeats are necessary and sufficient for binding COMP.</text>
</comment>
<comment type="domain">
    <text evidence="1">The spacer domain and the TSP type-1 domains are important for a tight interaction with the extracellular matrix.</text>
</comment>
<comment type="domain">
    <text>The conserved cysteine present in the cysteine-switch motif binds the catalytic zinc ion, thus inhibiting the enzyme. The dissociation of the cysteine from the zinc ion upon the activation-peptide release activates the enzyme.</text>
</comment>
<comment type="PTM">
    <text evidence="1">The precursor is cleaved by a furin endopeptidase.</text>
</comment>
<comment type="PTM">
    <text evidence="1">Subjected to an intracellular maturation process yielding a 120 kDa N-terminal fragment containing the metalloproteinase, disintegrin, one TSP type-1 and the Cys-rich domains and a 83 kDa C-terminal fragment containing the spacer 2 and four TSP type-1 domains.</text>
</comment>
<comment type="PTM">
    <text evidence="1">Glycosylated. Can be O-fucosylated by POFUT2 on a serine or a threonine residue found within the consensus sequence C1-X(2)-(S/T)-C2-G of the TSP type-1 repeat domains where C1 and C2 are the first and second cysteine residue of the repeat, respectively. Fucosylated repeats can then be further glycosylated by the addition of a beta-1,3-glucose residue by the glucosyltransferase, B3GALTL. Fucosylation mediates the efficient secretion of ADAMTS family members. Can also be C-glycosylated with one or two mannose molecules on tryptophan residues within the consensus sequence W-X-X-W of the TPRs, and N-glycosylated. These other glycosylations can also facilitate secretion (By similarity).</text>
</comment>
<protein>
    <recommendedName>
        <fullName>A disintegrin and metalloproteinase with thrombospondin motifs 12</fullName>
        <shortName>ADAM-TS 12</shortName>
        <shortName>ADAM-TS12</shortName>
        <shortName>ADAMTS-12</shortName>
        <ecNumber>3.4.24.-</ecNumber>
    </recommendedName>
</protein>
<name>ATS12_MOUSE</name>
<organism>
    <name type="scientific">Mus musculus</name>
    <name type="common">Mouse</name>
    <dbReference type="NCBI Taxonomy" id="10090"/>
    <lineage>
        <taxon>Eukaryota</taxon>
        <taxon>Metazoa</taxon>
        <taxon>Chordata</taxon>
        <taxon>Craniata</taxon>
        <taxon>Vertebrata</taxon>
        <taxon>Euteleostomi</taxon>
        <taxon>Mammalia</taxon>
        <taxon>Eutheria</taxon>
        <taxon>Euarchontoglires</taxon>
        <taxon>Glires</taxon>
        <taxon>Rodentia</taxon>
        <taxon>Myomorpha</taxon>
        <taxon>Muroidea</taxon>
        <taxon>Muridae</taxon>
        <taxon>Murinae</taxon>
        <taxon>Mus</taxon>
        <taxon>Mus</taxon>
    </lineage>
</organism>
<reference key="1">
    <citation type="submission" date="2003-01" db="EMBL/GenBank/DDBJ databases">
        <title>Mouse ADAMTS-12.</title>
        <authorList>
            <person name="Cal S."/>
            <person name="Lopez-Otin C."/>
        </authorList>
    </citation>
    <scope>NUCLEOTIDE SEQUENCE [MRNA] (ISOFORM 1)</scope>
</reference>
<reference key="2">
    <citation type="journal article" date="2005" name="Science">
        <title>The transcriptional landscape of the mammalian genome.</title>
        <authorList>
            <person name="Carninci P."/>
            <person name="Kasukawa T."/>
            <person name="Katayama S."/>
            <person name="Gough J."/>
            <person name="Frith M.C."/>
            <person name="Maeda N."/>
            <person name="Oyama R."/>
            <person name="Ravasi T."/>
            <person name="Lenhard B."/>
            <person name="Wells C."/>
            <person name="Kodzius R."/>
            <person name="Shimokawa K."/>
            <person name="Bajic V.B."/>
            <person name="Brenner S.E."/>
            <person name="Batalov S."/>
            <person name="Forrest A.R."/>
            <person name="Zavolan M."/>
            <person name="Davis M.J."/>
            <person name="Wilming L.G."/>
            <person name="Aidinis V."/>
            <person name="Allen J.E."/>
            <person name="Ambesi-Impiombato A."/>
            <person name="Apweiler R."/>
            <person name="Aturaliya R.N."/>
            <person name="Bailey T.L."/>
            <person name="Bansal M."/>
            <person name="Baxter L."/>
            <person name="Beisel K.W."/>
            <person name="Bersano T."/>
            <person name="Bono H."/>
            <person name="Chalk A.M."/>
            <person name="Chiu K.P."/>
            <person name="Choudhary V."/>
            <person name="Christoffels A."/>
            <person name="Clutterbuck D.R."/>
            <person name="Crowe M.L."/>
            <person name="Dalla E."/>
            <person name="Dalrymple B.P."/>
            <person name="de Bono B."/>
            <person name="Della Gatta G."/>
            <person name="di Bernardo D."/>
            <person name="Down T."/>
            <person name="Engstrom P."/>
            <person name="Fagiolini M."/>
            <person name="Faulkner G."/>
            <person name="Fletcher C.F."/>
            <person name="Fukushima T."/>
            <person name="Furuno M."/>
            <person name="Futaki S."/>
            <person name="Gariboldi M."/>
            <person name="Georgii-Hemming P."/>
            <person name="Gingeras T.R."/>
            <person name="Gojobori T."/>
            <person name="Green R.E."/>
            <person name="Gustincich S."/>
            <person name="Harbers M."/>
            <person name="Hayashi Y."/>
            <person name="Hensch T.K."/>
            <person name="Hirokawa N."/>
            <person name="Hill D."/>
            <person name="Huminiecki L."/>
            <person name="Iacono M."/>
            <person name="Ikeo K."/>
            <person name="Iwama A."/>
            <person name="Ishikawa T."/>
            <person name="Jakt M."/>
            <person name="Kanapin A."/>
            <person name="Katoh M."/>
            <person name="Kawasawa Y."/>
            <person name="Kelso J."/>
            <person name="Kitamura H."/>
            <person name="Kitano H."/>
            <person name="Kollias G."/>
            <person name="Krishnan S.P."/>
            <person name="Kruger A."/>
            <person name="Kummerfeld S.K."/>
            <person name="Kurochkin I.V."/>
            <person name="Lareau L.F."/>
            <person name="Lazarevic D."/>
            <person name="Lipovich L."/>
            <person name="Liu J."/>
            <person name="Liuni S."/>
            <person name="McWilliam S."/>
            <person name="Madan Babu M."/>
            <person name="Madera M."/>
            <person name="Marchionni L."/>
            <person name="Matsuda H."/>
            <person name="Matsuzawa S."/>
            <person name="Miki H."/>
            <person name="Mignone F."/>
            <person name="Miyake S."/>
            <person name="Morris K."/>
            <person name="Mottagui-Tabar S."/>
            <person name="Mulder N."/>
            <person name="Nakano N."/>
            <person name="Nakauchi H."/>
            <person name="Ng P."/>
            <person name="Nilsson R."/>
            <person name="Nishiguchi S."/>
            <person name="Nishikawa S."/>
            <person name="Nori F."/>
            <person name="Ohara O."/>
            <person name="Okazaki Y."/>
            <person name="Orlando V."/>
            <person name="Pang K.C."/>
            <person name="Pavan W.J."/>
            <person name="Pavesi G."/>
            <person name="Pesole G."/>
            <person name="Petrovsky N."/>
            <person name="Piazza S."/>
            <person name="Reed J."/>
            <person name="Reid J.F."/>
            <person name="Ring B.Z."/>
            <person name="Ringwald M."/>
            <person name="Rost B."/>
            <person name="Ruan Y."/>
            <person name="Salzberg S.L."/>
            <person name="Sandelin A."/>
            <person name="Schneider C."/>
            <person name="Schoenbach C."/>
            <person name="Sekiguchi K."/>
            <person name="Semple C.A."/>
            <person name="Seno S."/>
            <person name="Sessa L."/>
            <person name="Sheng Y."/>
            <person name="Shibata Y."/>
            <person name="Shimada H."/>
            <person name="Shimada K."/>
            <person name="Silva D."/>
            <person name="Sinclair B."/>
            <person name="Sperling S."/>
            <person name="Stupka E."/>
            <person name="Sugiura K."/>
            <person name="Sultana R."/>
            <person name="Takenaka Y."/>
            <person name="Taki K."/>
            <person name="Tammoja K."/>
            <person name="Tan S.L."/>
            <person name="Tang S."/>
            <person name="Taylor M.S."/>
            <person name="Tegner J."/>
            <person name="Teichmann S.A."/>
            <person name="Ueda H.R."/>
            <person name="van Nimwegen E."/>
            <person name="Verardo R."/>
            <person name="Wei C.L."/>
            <person name="Yagi K."/>
            <person name="Yamanishi H."/>
            <person name="Zabarovsky E."/>
            <person name="Zhu S."/>
            <person name="Zimmer A."/>
            <person name="Hide W."/>
            <person name="Bult C."/>
            <person name="Grimmond S.M."/>
            <person name="Teasdale R.D."/>
            <person name="Liu E.T."/>
            <person name="Brusic V."/>
            <person name="Quackenbush J."/>
            <person name="Wahlestedt C."/>
            <person name="Mattick J.S."/>
            <person name="Hume D.A."/>
            <person name="Kai C."/>
            <person name="Sasaki D."/>
            <person name="Tomaru Y."/>
            <person name="Fukuda S."/>
            <person name="Kanamori-Katayama M."/>
            <person name="Suzuki M."/>
            <person name="Aoki J."/>
            <person name="Arakawa T."/>
            <person name="Iida J."/>
            <person name="Imamura K."/>
            <person name="Itoh M."/>
            <person name="Kato T."/>
            <person name="Kawaji H."/>
            <person name="Kawagashira N."/>
            <person name="Kawashima T."/>
            <person name="Kojima M."/>
            <person name="Kondo S."/>
            <person name="Konno H."/>
            <person name="Nakano K."/>
            <person name="Ninomiya N."/>
            <person name="Nishio T."/>
            <person name="Okada M."/>
            <person name="Plessy C."/>
            <person name="Shibata K."/>
            <person name="Shiraki T."/>
            <person name="Suzuki S."/>
            <person name="Tagami M."/>
            <person name="Waki K."/>
            <person name="Watahiki A."/>
            <person name="Okamura-Oho Y."/>
            <person name="Suzuki H."/>
            <person name="Kawai J."/>
            <person name="Hayashizaki Y."/>
        </authorList>
    </citation>
    <scope>NUCLEOTIDE SEQUENCE [LARGE SCALE MRNA] (ISOFORM 2)</scope>
    <scope>NUCLEOTIDE SEQUENCE [LARGE SCALE MRNA] OF 1-1009 (ISOFORM 1)</scope>
    <source>
        <strain>C57BL/6J</strain>
        <tissue>Embryonic head</tissue>
        <tissue>Oviduct</tissue>
    </source>
</reference>
<reference key="3">
    <citation type="journal article" date="2009" name="PLoS Biol.">
        <title>Lineage-specific biology revealed by a finished genome assembly of the mouse.</title>
        <authorList>
            <person name="Church D.M."/>
            <person name="Goodstadt L."/>
            <person name="Hillier L.W."/>
            <person name="Zody M.C."/>
            <person name="Goldstein S."/>
            <person name="She X."/>
            <person name="Bult C.J."/>
            <person name="Agarwala R."/>
            <person name="Cherry J.L."/>
            <person name="DiCuccio M."/>
            <person name="Hlavina W."/>
            <person name="Kapustin Y."/>
            <person name="Meric P."/>
            <person name="Maglott D."/>
            <person name="Birtle Z."/>
            <person name="Marques A.C."/>
            <person name="Graves T."/>
            <person name="Zhou S."/>
            <person name="Teague B."/>
            <person name="Potamousis K."/>
            <person name="Churas C."/>
            <person name="Place M."/>
            <person name="Herschleb J."/>
            <person name="Runnheim R."/>
            <person name="Forrest D."/>
            <person name="Amos-Landgraf J."/>
            <person name="Schwartz D.C."/>
            <person name="Cheng Z."/>
            <person name="Lindblad-Toh K."/>
            <person name="Eichler E.E."/>
            <person name="Ponting C.P."/>
        </authorList>
    </citation>
    <scope>NUCLEOTIDE SEQUENCE [LARGE SCALE GENOMIC DNA]</scope>
    <source>
        <strain>C57BL/6J</strain>
    </source>
</reference>
<proteinExistence type="evidence at transcript level"/>
<accession>Q811B3</accession>
<accession>E9QKD6</accession>
<accession>Q8BK92</accession>
<accession>Q8BKY1</accession>